<accession>A1UA84</accession>
<dbReference type="EC" id="6.3.4.4" evidence="1"/>
<dbReference type="EMBL" id="CP000518">
    <property type="protein sequence ID" value="ABL89742.1"/>
    <property type="molecule type" value="Genomic_DNA"/>
</dbReference>
<dbReference type="SMR" id="A1UA84"/>
<dbReference type="STRING" id="189918.Mkms_0526"/>
<dbReference type="KEGG" id="mkm:Mkms_0526"/>
<dbReference type="HOGENOM" id="CLU_029848_0_0_11"/>
<dbReference type="OrthoDB" id="9807553at2"/>
<dbReference type="UniPathway" id="UPA00075">
    <property type="reaction ID" value="UER00335"/>
</dbReference>
<dbReference type="GO" id="GO:0005737">
    <property type="term" value="C:cytoplasm"/>
    <property type="evidence" value="ECO:0007669"/>
    <property type="project" value="UniProtKB-SubCell"/>
</dbReference>
<dbReference type="GO" id="GO:0004019">
    <property type="term" value="F:adenylosuccinate synthase activity"/>
    <property type="evidence" value="ECO:0007669"/>
    <property type="project" value="UniProtKB-UniRule"/>
</dbReference>
<dbReference type="GO" id="GO:0005525">
    <property type="term" value="F:GTP binding"/>
    <property type="evidence" value="ECO:0007669"/>
    <property type="project" value="UniProtKB-UniRule"/>
</dbReference>
<dbReference type="GO" id="GO:0000287">
    <property type="term" value="F:magnesium ion binding"/>
    <property type="evidence" value="ECO:0007669"/>
    <property type="project" value="UniProtKB-UniRule"/>
</dbReference>
<dbReference type="GO" id="GO:0044208">
    <property type="term" value="P:'de novo' AMP biosynthetic process"/>
    <property type="evidence" value="ECO:0007669"/>
    <property type="project" value="UniProtKB-UniRule"/>
</dbReference>
<dbReference type="GO" id="GO:0046040">
    <property type="term" value="P:IMP metabolic process"/>
    <property type="evidence" value="ECO:0007669"/>
    <property type="project" value="TreeGrafter"/>
</dbReference>
<dbReference type="CDD" id="cd03108">
    <property type="entry name" value="AdSS"/>
    <property type="match status" value="1"/>
</dbReference>
<dbReference type="FunFam" id="1.10.300.10:FF:000001">
    <property type="entry name" value="Adenylosuccinate synthetase"/>
    <property type="match status" value="1"/>
</dbReference>
<dbReference type="FunFam" id="3.90.170.10:FF:000001">
    <property type="entry name" value="Adenylosuccinate synthetase"/>
    <property type="match status" value="1"/>
</dbReference>
<dbReference type="Gene3D" id="3.40.440.10">
    <property type="entry name" value="Adenylosuccinate Synthetase, subunit A, domain 1"/>
    <property type="match status" value="1"/>
</dbReference>
<dbReference type="Gene3D" id="1.10.300.10">
    <property type="entry name" value="Adenylosuccinate Synthetase, subunit A, domain 2"/>
    <property type="match status" value="1"/>
</dbReference>
<dbReference type="Gene3D" id="3.90.170.10">
    <property type="entry name" value="Adenylosuccinate Synthetase, subunit A, domain 3"/>
    <property type="match status" value="1"/>
</dbReference>
<dbReference type="HAMAP" id="MF_00011">
    <property type="entry name" value="Adenylosucc_synth"/>
    <property type="match status" value="1"/>
</dbReference>
<dbReference type="InterPro" id="IPR018220">
    <property type="entry name" value="Adenylosuccin_syn_GTP-bd"/>
</dbReference>
<dbReference type="InterPro" id="IPR033128">
    <property type="entry name" value="Adenylosuccin_syn_Lys_AS"/>
</dbReference>
<dbReference type="InterPro" id="IPR042109">
    <property type="entry name" value="Adenylosuccinate_synth_dom1"/>
</dbReference>
<dbReference type="InterPro" id="IPR042110">
    <property type="entry name" value="Adenylosuccinate_synth_dom2"/>
</dbReference>
<dbReference type="InterPro" id="IPR042111">
    <property type="entry name" value="Adenylosuccinate_synth_dom3"/>
</dbReference>
<dbReference type="InterPro" id="IPR001114">
    <property type="entry name" value="Adenylosuccinate_synthetase"/>
</dbReference>
<dbReference type="InterPro" id="IPR027417">
    <property type="entry name" value="P-loop_NTPase"/>
</dbReference>
<dbReference type="NCBIfam" id="NF002223">
    <property type="entry name" value="PRK01117.1"/>
    <property type="match status" value="1"/>
</dbReference>
<dbReference type="NCBIfam" id="TIGR00184">
    <property type="entry name" value="purA"/>
    <property type="match status" value="1"/>
</dbReference>
<dbReference type="PANTHER" id="PTHR11846">
    <property type="entry name" value="ADENYLOSUCCINATE SYNTHETASE"/>
    <property type="match status" value="1"/>
</dbReference>
<dbReference type="PANTHER" id="PTHR11846:SF0">
    <property type="entry name" value="ADENYLOSUCCINATE SYNTHETASE"/>
    <property type="match status" value="1"/>
</dbReference>
<dbReference type="Pfam" id="PF00709">
    <property type="entry name" value="Adenylsucc_synt"/>
    <property type="match status" value="1"/>
</dbReference>
<dbReference type="SMART" id="SM00788">
    <property type="entry name" value="Adenylsucc_synt"/>
    <property type="match status" value="1"/>
</dbReference>
<dbReference type="SUPFAM" id="SSF52540">
    <property type="entry name" value="P-loop containing nucleoside triphosphate hydrolases"/>
    <property type="match status" value="1"/>
</dbReference>
<dbReference type="PROSITE" id="PS01266">
    <property type="entry name" value="ADENYLOSUCCIN_SYN_1"/>
    <property type="match status" value="1"/>
</dbReference>
<dbReference type="PROSITE" id="PS00513">
    <property type="entry name" value="ADENYLOSUCCIN_SYN_2"/>
    <property type="match status" value="1"/>
</dbReference>
<feature type="chain" id="PRO_1000000870" description="Adenylosuccinate synthetase">
    <location>
        <begin position="1"/>
        <end position="431"/>
    </location>
</feature>
<feature type="active site" description="Proton acceptor" evidence="1">
    <location>
        <position position="13"/>
    </location>
</feature>
<feature type="active site" description="Proton donor" evidence="1">
    <location>
        <position position="41"/>
    </location>
</feature>
<feature type="binding site" evidence="1">
    <location>
        <begin position="12"/>
        <end position="18"/>
    </location>
    <ligand>
        <name>GTP</name>
        <dbReference type="ChEBI" id="CHEBI:37565"/>
    </ligand>
</feature>
<feature type="binding site" description="in other chain" evidence="1">
    <location>
        <begin position="13"/>
        <end position="16"/>
    </location>
    <ligand>
        <name>IMP</name>
        <dbReference type="ChEBI" id="CHEBI:58053"/>
        <note>ligand shared between dimeric partners</note>
    </ligand>
</feature>
<feature type="binding site" evidence="1">
    <location>
        <position position="13"/>
    </location>
    <ligand>
        <name>Mg(2+)</name>
        <dbReference type="ChEBI" id="CHEBI:18420"/>
    </ligand>
</feature>
<feature type="binding site" description="in other chain" evidence="1">
    <location>
        <begin position="38"/>
        <end position="41"/>
    </location>
    <ligand>
        <name>IMP</name>
        <dbReference type="ChEBI" id="CHEBI:58053"/>
        <note>ligand shared between dimeric partners</note>
    </ligand>
</feature>
<feature type="binding site" evidence="1">
    <location>
        <begin position="40"/>
        <end position="42"/>
    </location>
    <ligand>
        <name>GTP</name>
        <dbReference type="ChEBI" id="CHEBI:37565"/>
    </ligand>
</feature>
<feature type="binding site" evidence="1">
    <location>
        <position position="40"/>
    </location>
    <ligand>
        <name>Mg(2+)</name>
        <dbReference type="ChEBI" id="CHEBI:18420"/>
    </ligand>
</feature>
<feature type="binding site" description="in other chain" evidence="1">
    <location>
        <position position="129"/>
    </location>
    <ligand>
        <name>IMP</name>
        <dbReference type="ChEBI" id="CHEBI:58053"/>
        <note>ligand shared between dimeric partners</note>
    </ligand>
</feature>
<feature type="binding site" evidence="1">
    <location>
        <position position="143"/>
    </location>
    <ligand>
        <name>IMP</name>
        <dbReference type="ChEBI" id="CHEBI:58053"/>
        <note>ligand shared between dimeric partners</note>
    </ligand>
</feature>
<feature type="binding site" description="in other chain" evidence="1">
    <location>
        <position position="224"/>
    </location>
    <ligand>
        <name>IMP</name>
        <dbReference type="ChEBI" id="CHEBI:58053"/>
        <note>ligand shared between dimeric partners</note>
    </ligand>
</feature>
<feature type="binding site" description="in other chain" evidence="1">
    <location>
        <position position="239"/>
    </location>
    <ligand>
        <name>IMP</name>
        <dbReference type="ChEBI" id="CHEBI:58053"/>
        <note>ligand shared between dimeric partners</note>
    </ligand>
</feature>
<feature type="binding site" evidence="1">
    <location>
        <begin position="299"/>
        <end position="305"/>
    </location>
    <ligand>
        <name>substrate</name>
    </ligand>
</feature>
<feature type="binding site" description="in other chain" evidence="1">
    <location>
        <position position="303"/>
    </location>
    <ligand>
        <name>IMP</name>
        <dbReference type="ChEBI" id="CHEBI:58053"/>
        <note>ligand shared between dimeric partners</note>
    </ligand>
</feature>
<feature type="binding site" evidence="1">
    <location>
        <position position="305"/>
    </location>
    <ligand>
        <name>GTP</name>
        <dbReference type="ChEBI" id="CHEBI:37565"/>
    </ligand>
</feature>
<feature type="binding site" evidence="1">
    <location>
        <begin position="331"/>
        <end position="333"/>
    </location>
    <ligand>
        <name>GTP</name>
        <dbReference type="ChEBI" id="CHEBI:37565"/>
    </ligand>
</feature>
<feature type="binding site" evidence="1">
    <location>
        <begin position="413"/>
        <end position="415"/>
    </location>
    <ligand>
        <name>GTP</name>
        <dbReference type="ChEBI" id="CHEBI:37565"/>
    </ligand>
</feature>
<sequence>MPAIVLIGAQWGDEGKGKATDLLGGRVQWVVRYQGGNNAGHTVVLPTGENFALHLIPSGILTPGVTNVIGNGVVVDPGVLLTELRGLEERGVDTERLLISADAHLLMPYHVAIDKVVERYAGSKKIGTTGRGIGPCYQDKIARQGIRVADVLDPAVLAEKIEGALELKNQVLVKIYNRKALEPAEVVENLLEQAEGFKHRIADARLLLNQALERDEIVLLEGSQGTLLDVDHGTYPYVTSSNPTAGGASVGSGIGPTRITTVLGILKAYTTRVGSGPFPTELFDEHGAYLAKTGGEVGVTTGRARRCGWFDAVIARYATRVNGITDYFLTKLDVLSSLETVPICVGYTIDGKRTDEMPMTQSDIARAEPVYEELPGWWEDISGAREFDDLPAKARDYVLRLEELAGAHVSCIGVGPGRDQTIVRRDVLAPS</sequence>
<keyword id="KW-0963">Cytoplasm</keyword>
<keyword id="KW-0342">GTP-binding</keyword>
<keyword id="KW-0436">Ligase</keyword>
<keyword id="KW-0460">Magnesium</keyword>
<keyword id="KW-0479">Metal-binding</keyword>
<keyword id="KW-0547">Nucleotide-binding</keyword>
<keyword id="KW-0658">Purine biosynthesis</keyword>
<comment type="function">
    <text evidence="1">Plays an important role in the de novo pathway of purine nucleotide biosynthesis. Catalyzes the first committed step in the biosynthesis of AMP from IMP.</text>
</comment>
<comment type="catalytic activity">
    <reaction evidence="1">
        <text>IMP + L-aspartate + GTP = N(6)-(1,2-dicarboxyethyl)-AMP + GDP + phosphate + 2 H(+)</text>
        <dbReference type="Rhea" id="RHEA:15753"/>
        <dbReference type="ChEBI" id="CHEBI:15378"/>
        <dbReference type="ChEBI" id="CHEBI:29991"/>
        <dbReference type="ChEBI" id="CHEBI:37565"/>
        <dbReference type="ChEBI" id="CHEBI:43474"/>
        <dbReference type="ChEBI" id="CHEBI:57567"/>
        <dbReference type="ChEBI" id="CHEBI:58053"/>
        <dbReference type="ChEBI" id="CHEBI:58189"/>
        <dbReference type="EC" id="6.3.4.4"/>
    </reaction>
</comment>
<comment type="cofactor">
    <cofactor evidence="1">
        <name>Mg(2+)</name>
        <dbReference type="ChEBI" id="CHEBI:18420"/>
    </cofactor>
    <text evidence="1">Binds 1 Mg(2+) ion per subunit.</text>
</comment>
<comment type="pathway">
    <text evidence="1">Purine metabolism; AMP biosynthesis via de novo pathway; AMP from IMP: step 1/2.</text>
</comment>
<comment type="subunit">
    <text evidence="1">Homodimer.</text>
</comment>
<comment type="subcellular location">
    <subcellularLocation>
        <location evidence="1">Cytoplasm</location>
    </subcellularLocation>
</comment>
<comment type="similarity">
    <text evidence="1">Belongs to the adenylosuccinate synthetase family.</text>
</comment>
<reference key="1">
    <citation type="submission" date="2006-12" db="EMBL/GenBank/DDBJ databases">
        <title>Complete sequence of chromosome of Mycobacterium sp. KMS.</title>
        <authorList>
            <consortium name="US DOE Joint Genome Institute"/>
            <person name="Copeland A."/>
            <person name="Lucas S."/>
            <person name="Lapidus A."/>
            <person name="Barry K."/>
            <person name="Detter J.C."/>
            <person name="Glavina del Rio T."/>
            <person name="Hammon N."/>
            <person name="Israni S."/>
            <person name="Dalin E."/>
            <person name="Tice H."/>
            <person name="Pitluck S."/>
            <person name="Kiss H."/>
            <person name="Brettin T."/>
            <person name="Bruce D."/>
            <person name="Han C."/>
            <person name="Tapia R."/>
            <person name="Gilna P."/>
            <person name="Schmutz J."/>
            <person name="Larimer F."/>
            <person name="Land M."/>
            <person name="Hauser L."/>
            <person name="Kyrpides N."/>
            <person name="Mikhailova N."/>
            <person name="Miller C.D."/>
            <person name="Richardson P."/>
        </authorList>
    </citation>
    <scope>NUCLEOTIDE SEQUENCE [LARGE SCALE GENOMIC DNA]</scope>
    <source>
        <strain>KMS</strain>
    </source>
</reference>
<gene>
    <name evidence="1" type="primary">purA</name>
    <name type="ordered locus">Mkms_0526</name>
</gene>
<proteinExistence type="inferred from homology"/>
<organism>
    <name type="scientific">Mycobacterium sp. (strain KMS)</name>
    <dbReference type="NCBI Taxonomy" id="189918"/>
    <lineage>
        <taxon>Bacteria</taxon>
        <taxon>Bacillati</taxon>
        <taxon>Actinomycetota</taxon>
        <taxon>Actinomycetes</taxon>
        <taxon>Mycobacteriales</taxon>
        <taxon>Mycobacteriaceae</taxon>
        <taxon>Mycobacterium</taxon>
    </lineage>
</organism>
<name>PURA_MYCSK</name>
<protein>
    <recommendedName>
        <fullName evidence="1">Adenylosuccinate synthetase</fullName>
        <shortName evidence="1">AMPSase</shortName>
        <shortName evidence="1">AdSS</shortName>
        <ecNumber evidence="1">6.3.4.4</ecNumber>
    </recommendedName>
    <alternativeName>
        <fullName evidence="1">IMP--aspartate ligase</fullName>
    </alternativeName>
</protein>
<evidence type="ECO:0000255" key="1">
    <source>
        <dbReference type="HAMAP-Rule" id="MF_00011"/>
    </source>
</evidence>